<name>RS19_OLEA2</name>
<gene>
    <name evidence="1" type="primary">rpsS</name>
    <name type="ordered locus">Dde_2253</name>
</gene>
<dbReference type="EMBL" id="CP000112">
    <property type="protein sequence ID" value="ABB39050.1"/>
    <property type="molecule type" value="Genomic_DNA"/>
</dbReference>
<dbReference type="RefSeq" id="WP_011368141.1">
    <property type="nucleotide sequence ID" value="NC_007519.1"/>
</dbReference>
<dbReference type="SMR" id="Q30Z46"/>
<dbReference type="STRING" id="207559.Dde_2253"/>
<dbReference type="KEGG" id="dde:Dde_2253"/>
<dbReference type="eggNOG" id="COG0185">
    <property type="taxonomic scope" value="Bacteria"/>
</dbReference>
<dbReference type="HOGENOM" id="CLU_144911_0_1_7"/>
<dbReference type="Proteomes" id="UP000002710">
    <property type="component" value="Chromosome"/>
</dbReference>
<dbReference type="GO" id="GO:0005737">
    <property type="term" value="C:cytoplasm"/>
    <property type="evidence" value="ECO:0007669"/>
    <property type="project" value="UniProtKB-ARBA"/>
</dbReference>
<dbReference type="GO" id="GO:0015935">
    <property type="term" value="C:small ribosomal subunit"/>
    <property type="evidence" value="ECO:0007669"/>
    <property type="project" value="InterPro"/>
</dbReference>
<dbReference type="GO" id="GO:0019843">
    <property type="term" value="F:rRNA binding"/>
    <property type="evidence" value="ECO:0007669"/>
    <property type="project" value="UniProtKB-UniRule"/>
</dbReference>
<dbReference type="GO" id="GO:0003735">
    <property type="term" value="F:structural constituent of ribosome"/>
    <property type="evidence" value="ECO:0007669"/>
    <property type="project" value="InterPro"/>
</dbReference>
<dbReference type="GO" id="GO:0000028">
    <property type="term" value="P:ribosomal small subunit assembly"/>
    <property type="evidence" value="ECO:0007669"/>
    <property type="project" value="TreeGrafter"/>
</dbReference>
<dbReference type="GO" id="GO:0006412">
    <property type="term" value="P:translation"/>
    <property type="evidence" value="ECO:0007669"/>
    <property type="project" value="UniProtKB-UniRule"/>
</dbReference>
<dbReference type="FunFam" id="3.30.860.10:FF:000001">
    <property type="entry name" value="30S ribosomal protein S19"/>
    <property type="match status" value="1"/>
</dbReference>
<dbReference type="Gene3D" id="3.30.860.10">
    <property type="entry name" value="30s Ribosomal Protein S19, Chain A"/>
    <property type="match status" value="1"/>
</dbReference>
<dbReference type="HAMAP" id="MF_00531">
    <property type="entry name" value="Ribosomal_uS19"/>
    <property type="match status" value="1"/>
</dbReference>
<dbReference type="InterPro" id="IPR002222">
    <property type="entry name" value="Ribosomal_uS19"/>
</dbReference>
<dbReference type="InterPro" id="IPR005732">
    <property type="entry name" value="Ribosomal_uS19_bac-type"/>
</dbReference>
<dbReference type="InterPro" id="IPR020934">
    <property type="entry name" value="Ribosomal_uS19_CS"/>
</dbReference>
<dbReference type="InterPro" id="IPR023575">
    <property type="entry name" value="Ribosomal_uS19_SF"/>
</dbReference>
<dbReference type="NCBIfam" id="TIGR01050">
    <property type="entry name" value="rpsS_bact"/>
    <property type="match status" value="1"/>
</dbReference>
<dbReference type="PANTHER" id="PTHR11880">
    <property type="entry name" value="RIBOSOMAL PROTEIN S19P FAMILY MEMBER"/>
    <property type="match status" value="1"/>
</dbReference>
<dbReference type="PANTHER" id="PTHR11880:SF8">
    <property type="entry name" value="SMALL RIBOSOMAL SUBUNIT PROTEIN US19M"/>
    <property type="match status" value="1"/>
</dbReference>
<dbReference type="Pfam" id="PF00203">
    <property type="entry name" value="Ribosomal_S19"/>
    <property type="match status" value="1"/>
</dbReference>
<dbReference type="PIRSF" id="PIRSF002144">
    <property type="entry name" value="Ribosomal_S19"/>
    <property type="match status" value="1"/>
</dbReference>
<dbReference type="PRINTS" id="PR00975">
    <property type="entry name" value="RIBOSOMALS19"/>
</dbReference>
<dbReference type="SUPFAM" id="SSF54570">
    <property type="entry name" value="Ribosomal protein S19"/>
    <property type="match status" value="1"/>
</dbReference>
<dbReference type="PROSITE" id="PS00323">
    <property type="entry name" value="RIBOSOMAL_S19"/>
    <property type="match status" value="1"/>
</dbReference>
<accession>Q30Z46</accession>
<protein>
    <recommendedName>
        <fullName evidence="1">Small ribosomal subunit protein uS19</fullName>
    </recommendedName>
    <alternativeName>
        <fullName evidence="2">30S ribosomal protein S19</fullName>
    </alternativeName>
</protein>
<sequence length="93" mass="10631">MPRSLKKGPFIDDHVMKKVEKAQESGDRRVIKTWSRRSTISPEMVGLTFAVHNGRKFIPVFVTENMVGHKLGEFSPTRTYYGHAADKKSKAKR</sequence>
<comment type="function">
    <text evidence="1">Protein S19 forms a complex with S13 that binds strongly to the 16S ribosomal RNA.</text>
</comment>
<comment type="similarity">
    <text evidence="1">Belongs to the universal ribosomal protein uS19 family.</text>
</comment>
<reference key="1">
    <citation type="journal article" date="2011" name="J. Bacteriol.">
        <title>Complete genome sequence and updated annotation of Desulfovibrio alaskensis G20.</title>
        <authorList>
            <person name="Hauser L.J."/>
            <person name="Land M.L."/>
            <person name="Brown S.D."/>
            <person name="Larimer F."/>
            <person name="Keller K.L."/>
            <person name="Rapp-Giles B.J."/>
            <person name="Price M.N."/>
            <person name="Lin M."/>
            <person name="Bruce D.C."/>
            <person name="Detter J.C."/>
            <person name="Tapia R."/>
            <person name="Han C.S."/>
            <person name="Goodwin L.A."/>
            <person name="Cheng J.F."/>
            <person name="Pitluck S."/>
            <person name="Copeland A."/>
            <person name="Lucas S."/>
            <person name="Nolan M."/>
            <person name="Lapidus A.L."/>
            <person name="Palumbo A.V."/>
            <person name="Wall J.D."/>
        </authorList>
    </citation>
    <scope>NUCLEOTIDE SEQUENCE [LARGE SCALE GENOMIC DNA]</scope>
    <source>
        <strain>ATCC BAA-1058 / DSM 17464 / G20</strain>
    </source>
</reference>
<proteinExistence type="inferred from homology"/>
<organism>
    <name type="scientific">Oleidesulfovibrio alaskensis (strain ATCC BAA-1058 / DSM 17464 / G20)</name>
    <name type="common">Desulfovibrio alaskensis</name>
    <dbReference type="NCBI Taxonomy" id="207559"/>
    <lineage>
        <taxon>Bacteria</taxon>
        <taxon>Pseudomonadati</taxon>
        <taxon>Thermodesulfobacteriota</taxon>
        <taxon>Desulfovibrionia</taxon>
        <taxon>Desulfovibrionales</taxon>
        <taxon>Desulfovibrionaceae</taxon>
        <taxon>Oleidesulfovibrio</taxon>
    </lineage>
</organism>
<evidence type="ECO:0000255" key="1">
    <source>
        <dbReference type="HAMAP-Rule" id="MF_00531"/>
    </source>
</evidence>
<evidence type="ECO:0000305" key="2"/>
<keyword id="KW-1185">Reference proteome</keyword>
<keyword id="KW-0687">Ribonucleoprotein</keyword>
<keyword id="KW-0689">Ribosomal protein</keyword>
<keyword id="KW-0694">RNA-binding</keyword>
<keyword id="KW-0699">rRNA-binding</keyword>
<feature type="chain" id="PRO_0000265358" description="Small ribosomal subunit protein uS19">
    <location>
        <begin position="1"/>
        <end position="93"/>
    </location>
</feature>